<dbReference type="EC" id="2.5.1.78" evidence="1"/>
<dbReference type="EMBL" id="CP001048">
    <property type="protein sequence ID" value="ACC87957.1"/>
    <property type="molecule type" value="Genomic_DNA"/>
</dbReference>
<dbReference type="SMR" id="B2K6T3"/>
<dbReference type="KEGG" id="ypb:YPTS_0976"/>
<dbReference type="PATRIC" id="fig|502801.10.peg.317"/>
<dbReference type="UniPathway" id="UPA00275">
    <property type="reaction ID" value="UER00404"/>
</dbReference>
<dbReference type="GO" id="GO:0005829">
    <property type="term" value="C:cytosol"/>
    <property type="evidence" value="ECO:0007669"/>
    <property type="project" value="TreeGrafter"/>
</dbReference>
<dbReference type="GO" id="GO:0009349">
    <property type="term" value="C:riboflavin synthase complex"/>
    <property type="evidence" value="ECO:0007669"/>
    <property type="project" value="InterPro"/>
</dbReference>
<dbReference type="GO" id="GO:0000906">
    <property type="term" value="F:6,7-dimethyl-8-ribityllumazine synthase activity"/>
    <property type="evidence" value="ECO:0007669"/>
    <property type="project" value="UniProtKB-UniRule"/>
</dbReference>
<dbReference type="GO" id="GO:0009231">
    <property type="term" value="P:riboflavin biosynthetic process"/>
    <property type="evidence" value="ECO:0007669"/>
    <property type="project" value="UniProtKB-UniRule"/>
</dbReference>
<dbReference type="CDD" id="cd09209">
    <property type="entry name" value="Lumazine_synthase-I"/>
    <property type="match status" value="1"/>
</dbReference>
<dbReference type="FunFam" id="3.40.50.960:FF:000001">
    <property type="entry name" value="6,7-dimethyl-8-ribityllumazine synthase"/>
    <property type="match status" value="1"/>
</dbReference>
<dbReference type="Gene3D" id="3.40.50.960">
    <property type="entry name" value="Lumazine/riboflavin synthase"/>
    <property type="match status" value="1"/>
</dbReference>
<dbReference type="HAMAP" id="MF_00178">
    <property type="entry name" value="Lumazine_synth"/>
    <property type="match status" value="1"/>
</dbReference>
<dbReference type="InterPro" id="IPR034964">
    <property type="entry name" value="LS"/>
</dbReference>
<dbReference type="InterPro" id="IPR002180">
    <property type="entry name" value="LS/RS"/>
</dbReference>
<dbReference type="InterPro" id="IPR036467">
    <property type="entry name" value="LS/RS_sf"/>
</dbReference>
<dbReference type="NCBIfam" id="TIGR00114">
    <property type="entry name" value="lumazine-synth"/>
    <property type="match status" value="1"/>
</dbReference>
<dbReference type="NCBIfam" id="NF000812">
    <property type="entry name" value="PRK00061.1-4"/>
    <property type="match status" value="1"/>
</dbReference>
<dbReference type="PANTHER" id="PTHR21058:SF0">
    <property type="entry name" value="6,7-DIMETHYL-8-RIBITYLLUMAZINE SYNTHASE"/>
    <property type="match status" value="1"/>
</dbReference>
<dbReference type="PANTHER" id="PTHR21058">
    <property type="entry name" value="6,7-DIMETHYL-8-RIBITYLLUMAZINE SYNTHASE DMRL SYNTHASE LUMAZINE SYNTHASE"/>
    <property type="match status" value="1"/>
</dbReference>
<dbReference type="Pfam" id="PF00885">
    <property type="entry name" value="DMRL_synthase"/>
    <property type="match status" value="1"/>
</dbReference>
<dbReference type="SUPFAM" id="SSF52121">
    <property type="entry name" value="Lumazine synthase"/>
    <property type="match status" value="1"/>
</dbReference>
<organism>
    <name type="scientific">Yersinia pseudotuberculosis serotype IB (strain PB1/+)</name>
    <dbReference type="NCBI Taxonomy" id="502801"/>
    <lineage>
        <taxon>Bacteria</taxon>
        <taxon>Pseudomonadati</taxon>
        <taxon>Pseudomonadota</taxon>
        <taxon>Gammaproteobacteria</taxon>
        <taxon>Enterobacterales</taxon>
        <taxon>Yersiniaceae</taxon>
        <taxon>Yersinia</taxon>
    </lineage>
</organism>
<comment type="function">
    <text evidence="1">Catalyzes the formation of 6,7-dimethyl-8-ribityllumazine by condensation of 5-amino-6-(D-ribitylamino)uracil with 3,4-dihydroxy-2-butanone 4-phosphate. This is the penultimate step in the biosynthesis of riboflavin.</text>
</comment>
<comment type="catalytic activity">
    <reaction evidence="1">
        <text>(2S)-2-hydroxy-3-oxobutyl phosphate + 5-amino-6-(D-ribitylamino)uracil = 6,7-dimethyl-8-(1-D-ribityl)lumazine + phosphate + 2 H2O + H(+)</text>
        <dbReference type="Rhea" id="RHEA:26152"/>
        <dbReference type="ChEBI" id="CHEBI:15377"/>
        <dbReference type="ChEBI" id="CHEBI:15378"/>
        <dbReference type="ChEBI" id="CHEBI:15934"/>
        <dbReference type="ChEBI" id="CHEBI:43474"/>
        <dbReference type="ChEBI" id="CHEBI:58201"/>
        <dbReference type="ChEBI" id="CHEBI:58830"/>
        <dbReference type="EC" id="2.5.1.78"/>
    </reaction>
</comment>
<comment type="pathway">
    <text evidence="1">Cofactor biosynthesis; riboflavin biosynthesis; riboflavin from 2-hydroxy-3-oxobutyl phosphate and 5-amino-6-(D-ribitylamino)uracil: step 1/2.</text>
</comment>
<comment type="subunit">
    <text evidence="1">Forms an icosahedral capsid composed of 60 subunits, arranged as a dodecamer of pentamers.</text>
</comment>
<comment type="similarity">
    <text evidence="1">Belongs to the DMRL synthase family.</text>
</comment>
<feature type="chain" id="PRO_1000098255" description="6,7-dimethyl-8-ribityllumazine synthase">
    <location>
        <begin position="1"/>
        <end position="156"/>
    </location>
</feature>
<feature type="active site" description="Proton donor" evidence="1">
    <location>
        <position position="89"/>
    </location>
</feature>
<feature type="binding site" evidence="1">
    <location>
        <position position="22"/>
    </location>
    <ligand>
        <name>5-amino-6-(D-ribitylamino)uracil</name>
        <dbReference type="ChEBI" id="CHEBI:15934"/>
    </ligand>
</feature>
<feature type="binding site" evidence="1">
    <location>
        <begin position="57"/>
        <end position="59"/>
    </location>
    <ligand>
        <name>5-amino-6-(D-ribitylamino)uracil</name>
        <dbReference type="ChEBI" id="CHEBI:15934"/>
    </ligand>
</feature>
<feature type="binding site" evidence="1">
    <location>
        <begin position="81"/>
        <end position="83"/>
    </location>
    <ligand>
        <name>5-amino-6-(D-ribitylamino)uracil</name>
        <dbReference type="ChEBI" id="CHEBI:15934"/>
    </ligand>
</feature>
<feature type="binding site" evidence="1">
    <location>
        <begin position="86"/>
        <end position="87"/>
    </location>
    <ligand>
        <name>(2S)-2-hydroxy-3-oxobutyl phosphate</name>
        <dbReference type="ChEBI" id="CHEBI:58830"/>
    </ligand>
</feature>
<feature type="binding site" evidence="1">
    <location>
        <position position="114"/>
    </location>
    <ligand>
        <name>5-amino-6-(D-ribitylamino)uracil</name>
        <dbReference type="ChEBI" id="CHEBI:15934"/>
    </ligand>
</feature>
<feature type="binding site" evidence="1">
    <location>
        <position position="128"/>
    </location>
    <ligand>
        <name>(2S)-2-hydroxy-3-oxobutyl phosphate</name>
        <dbReference type="ChEBI" id="CHEBI:58830"/>
    </ligand>
</feature>
<evidence type="ECO:0000255" key="1">
    <source>
        <dbReference type="HAMAP-Rule" id="MF_00178"/>
    </source>
</evidence>
<protein>
    <recommendedName>
        <fullName evidence="1">6,7-dimethyl-8-ribityllumazine synthase</fullName>
        <shortName evidence="1">DMRL synthase</shortName>
        <shortName evidence="1">LS</shortName>
        <shortName evidence="1">Lumazine synthase</shortName>
        <ecNumber evidence="1">2.5.1.78</ecNumber>
    </recommendedName>
</protein>
<keyword id="KW-0686">Riboflavin biosynthesis</keyword>
<keyword id="KW-0808">Transferase</keyword>
<reference key="1">
    <citation type="submission" date="2008-04" db="EMBL/GenBank/DDBJ databases">
        <title>Complete sequence of Yersinia pseudotuberculosis PB1/+.</title>
        <authorList>
            <person name="Copeland A."/>
            <person name="Lucas S."/>
            <person name="Lapidus A."/>
            <person name="Glavina del Rio T."/>
            <person name="Dalin E."/>
            <person name="Tice H."/>
            <person name="Bruce D."/>
            <person name="Goodwin L."/>
            <person name="Pitluck S."/>
            <person name="Munk A.C."/>
            <person name="Brettin T."/>
            <person name="Detter J.C."/>
            <person name="Han C."/>
            <person name="Tapia R."/>
            <person name="Schmutz J."/>
            <person name="Larimer F."/>
            <person name="Land M."/>
            <person name="Hauser L."/>
            <person name="Challacombe J.F."/>
            <person name="Green L."/>
            <person name="Lindler L.E."/>
            <person name="Nikolich M.P."/>
            <person name="Richardson P."/>
        </authorList>
    </citation>
    <scope>NUCLEOTIDE SEQUENCE [LARGE SCALE GENOMIC DNA]</scope>
    <source>
        <strain>PB1/+</strain>
    </source>
</reference>
<sequence>MNVIEGVVATPNARVAIAIARFNNFINDSLLDGAIDALKRIGQVSDDNITVVWVPGAYELPLVANVLAKTNRYDAVIALGTVIRGGTAHFEYVAGEASSGLSSVAMNSDIPVAFGVLTTESIEQAIERAGTKAGNKGAEAALTALEMINVIKAIKG</sequence>
<name>RISB_YERPB</name>
<gene>
    <name evidence="1" type="primary">ribH</name>
    <name type="ordered locus">YPTS_0976</name>
</gene>
<accession>B2K6T3</accession>
<proteinExistence type="inferred from homology"/>